<feature type="signal peptide" evidence="2">
    <location>
        <begin position="1"/>
        <end position="17"/>
    </location>
</feature>
<feature type="chain" id="PRO_5013985662" description="Class I hydrophobin 3">
    <location>
        <begin position="18"/>
        <end position="108"/>
    </location>
</feature>
<feature type="disulfide bond" evidence="1">
    <location>
        <begin position="26"/>
        <end position="87"/>
    </location>
</feature>
<feature type="disulfide bond" evidence="1">
    <location>
        <begin position="33"/>
        <end position="81"/>
    </location>
</feature>
<feature type="disulfide bond" evidence="1">
    <location>
        <begin position="34"/>
        <end position="67"/>
    </location>
</feature>
<feature type="disulfide bond" evidence="1">
    <location>
        <begin position="88"/>
        <end position="101"/>
    </location>
</feature>
<keyword id="KW-0134">Cell wall</keyword>
<keyword id="KW-1015">Disulfide bond</keyword>
<keyword id="KW-0964">Secreted</keyword>
<keyword id="KW-0732">Signal</keyword>
<name>HYP3_PISTI</name>
<reference key="1">
    <citation type="journal article" date="2001" name="Curr. Genet.">
        <title>Cloning and expression analysis of a new hydrophobin cDNA from the ectomycorrhizal basidiomycete Pisolithus.</title>
        <authorList>
            <person name="Duplessis S."/>
            <person name="Sorin C."/>
            <person name="Voiblet C."/>
            <person name="Palin B."/>
            <person name="Martin F."/>
            <person name="Tagu D."/>
        </authorList>
    </citation>
    <scope>NUCLEOTIDE SEQUENCE [MRNA]</scope>
    <scope>INDUCTION</scope>
</reference>
<reference key="2">
    <citation type="journal article" date="2008" name="Curr. Microbiol.">
        <title>Fungal transcript pattern during the preinfection stage (12 h) of ectomycorrhiza formed between Pisolithus tinctorius and Castanea sativa roots, identified using cDNA microarrays.</title>
        <authorList>
            <person name="Acioli-Santos B."/>
            <person name="Sebastiana M."/>
            <person name="Pessoa F."/>
            <person name="Sousa L."/>
            <person name="Figueiredo A."/>
            <person name="Fortes A.M."/>
            <person name="Balde A."/>
            <person name="Maia L.C."/>
            <person name="Pais M.S."/>
        </authorList>
    </citation>
    <scope>INDUCTION</scope>
</reference>
<comment type="function">
    <text evidence="6">Aerial growth, conidiation, and dispersal of filamentous fungi in the environment rely upon a capability of their secreting small amphipathic proteins called hydrophobins (HPBs) with low sequence identity. Class I can self-assemble into an outermost layer of rodlet bundles on aerial cell surfaces, conferring cellular hydrophobicity that supports fungal growth, development and dispersal; whereas Class II form highly ordered films at water-air interfaces through intermolecular interactions but contribute nothing to the rodlet structure.</text>
</comment>
<comment type="subunit">
    <text evidence="1">Self-assembles to form functional amyloid fibrils called rodlets. Self-assembly into fibrillar rodlets occurs spontaneously at hydrophobic:hydrophilic interfaces and the rodlets further associate laterally to form amphipathic monolayers.</text>
</comment>
<comment type="subcellular location">
    <subcellularLocation>
        <location evidence="1">Secreted</location>
    </subcellularLocation>
    <subcellularLocation>
        <location evidence="1">Secreted</location>
        <location evidence="1">Cell wall</location>
    </subcellularLocation>
</comment>
<comment type="induction">
    <text evidence="3 4">Expression is not regulated by ammonium and glucose concentrations (PubMed:11525407). Expression is down-regulated during preinfection stage (12h) of ectomycorrhizal interaction with Castanea sativa roots (PubMed:18836771).</text>
</comment>
<comment type="similarity">
    <text evidence="6">Belongs to the fungal hydrophobin family.</text>
</comment>
<organism>
    <name type="scientific">Pisolithus tinctorius</name>
    <name type="common">Dead man's foot</name>
    <name type="synonym">Scleroderma tinctorium</name>
    <dbReference type="NCBI Taxonomy" id="37468"/>
    <lineage>
        <taxon>Eukaryota</taxon>
        <taxon>Fungi</taxon>
        <taxon>Dikarya</taxon>
        <taxon>Basidiomycota</taxon>
        <taxon>Agaricomycotina</taxon>
        <taxon>Agaricomycetes</taxon>
        <taxon>Agaricomycetidae</taxon>
        <taxon>Boletales</taxon>
        <taxon>Sclerodermatineae</taxon>
        <taxon>Pisolithaceae</taxon>
        <taxon>Pisolithus</taxon>
    </lineage>
</organism>
<gene>
    <name evidence="5" type="primary">hydPt-3</name>
</gene>
<proteinExistence type="evidence at transcript level"/>
<dbReference type="EMBL" id="AF097516">
    <property type="protein sequence ID" value="AAC95356.1"/>
    <property type="molecule type" value="mRNA"/>
</dbReference>
<dbReference type="SMR" id="O93917"/>
<dbReference type="GO" id="GO:0005576">
    <property type="term" value="C:extracellular region"/>
    <property type="evidence" value="ECO:0007669"/>
    <property type="project" value="UniProtKB-KW"/>
</dbReference>
<dbReference type="GO" id="GO:0009277">
    <property type="term" value="C:fungal-type cell wall"/>
    <property type="evidence" value="ECO:0007669"/>
    <property type="project" value="InterPro"/>
</dbReference>
<dbReference type="GO" id="GO:0005199">
    <property type="term" value="F:structural constituent of cell wall"/>
    <property type="evidence" value="ECO:0007669"/>
    <property type="project" value="InterPro"/>
</dbReference>
<dbReference type="CDD" id="cd23507">
    <property type="entry name" value="hydrophobin_I"/>
    <property type="match status" value="1"/>
</dbReference>
<dbReference type="InterPro" id="IPR001338">
    <property type="entry name" value="Hydrophobin"/>
</dbReference>
<dbReference type="InterPro" id="IPR019778">
    <property type="entry name" value="Hydrophobin_CS"/>
</dbReference>
<dbReference type="Pfam" id="PF01185">
    <property type="entry name" value="Hydrophobin"/>
    <property type="match status" value="1"/>
</dbReference>
<dbReference type="SMART" id="SM00075">
    <property type="entry name" value="HYDRO"/>
    <property type="match status" value="1"/>
</dbReference>
<dbReference type="PROSITE" id="PS00956">
    <property type="entry name" value="HYDROPHOBIN"/>
    <property type="match status" value="1"/>
</dbReference>
<sequence length="108" mass="11122">MFSRVFAVASLAALALAGPLSVRDQCNTGTIQCCQQVQQASYYQSAFQEIGLGELLAGVTGQIGTQCSPISVVGASNGAQCNAQTVCCTNTQFNGLINIGCMPINVNA</sequence>
<evidence type="ECO:0000250" key="1">
    <source>
        <dbReference type="UniProtKB" id="Q04571"/>
    </source>
</evidence>
<evidence type="ECO:0000255" key="2"/>
<evidence type="ECO:0000269" key="3">
    <source>
    </source>
</evidence>
<evidence type="ECO:0000269" key="4">
    <source>
    </source>
</evidence>
<evidence type="ECO:0000303" key="5">
    <source>
    </source>
</evidence>
<evidence type="ECO:0000305" key="6"/>
<accession>O93917</accession>
<protein>
    <recommendedName>
        <fullName evidence="5">Class I hydrophobin 3</fullName>
    </recommendedName>
</protein>